<keyword id="KW-1185">Reference proteome</keyword>
<keyword id="KW-0687">Ribonucleoprotein</keyword>
<keyword id="KW-0689">Ribosomal protein</keyword>
<evidence type="ECO:0000255" key="1">
    <source>
        <dbReference type="HAMAP-Rule" id="MF_00385"/>
    </source>
</evidence>
<evidence type="ECO:0000256" key="2">
    <source>
        <dbReference type="SAM" id="MobiDB-lite"/>
    </source>
</evidence>
<evidence type="ECO:0000305" key="3"/>
<organism>
    <name type="scientific">Rhodopseudomonas palustris (strain HaA2)</name>
    <dbReference type="NCBI Taxonomy" id="316058"/>
    <lineage>
        <taxon>Bacteria</taxon>
        <taxon>Pseudomonadati</taxon>
        <taxon>Pseudomonadota</taxon>
        <taxon>Alphaproteobacteria</taxon>
        <taxon>Hyphomicrobiales</taxon>
        <taxon>Nitrobacteraceae</taxon>
        <taxon>Rhodopseudomonas</taxon>
    </lineage>
</organism>
<dbReference type="EMBL" id="CP000250">
    <property type="protein sequence ID" value="ABD05063.1"/>
    <property type="molecule type" value="Genomic_DNA"/>
</dbReference>
<dbReference type="RefSeq" id="WP_011439253.1">
    <property type="nucleotide sequence ID" value="NC_007778.1"/>
</dbReference>
<dbReference type="SMR" id="Q2J397"/>
<dbReference type="STRING" id="316058.RPB_0352"/>
<dbReference type="KEGG" id="rpb:RPB_0352"/>
<dbReference type="eggNOG" id="COG0228">
    <property type="taxonomic scope" value="Bacteria"/>
</dbReference>
<dbReference type="HOGENOM" id="CLU_100590_3_1_5"/>
<dbReference type="OrthoDB" id="9807878at2"/>
<dbReference type="Proteomes" id="UP000008809">
    <property type="component" value="Chromosome"/>
</dbReference>
<dbReference type="GO" id="GO:0005737">
    <property type="term" value="C:cytoplasm"/>
    <property type="evidence" value="ECO:0007669"/>
    <property type="project" value="UniProtKB-ARBA"/>
</dbReference>
<dbReference type="GO" id="GO:0015935">
    <property type="term" value="C:small ribosomal subunit"/>
    <property type="evidence" value="ECO:0007669"/>
    <property type="project" value="TreeGrafter"/>
</dbReference>
<dbReference type="GO" id="GO:0003735">
    <property type="term" value="F:structural constituent of ribosome"/>
    <property type="evidence" value="ECO:0007669"/>
    <property type="project" value="InterPro"/>
</dbReference>
<dbReference type="GO" id="GO:0006412">
    <property type="term" value="P:translation"/>
    <property type="evidence" value="ECO:0007669"/>
    <property type="project" value="UniProtKB-UniRule"/>
</dbReference>
<dbReference type="FunFam" id="3.30.1320.10:FF:000008">
    <property type="entry name" value="30S ribosomal protein S16"/>
    <property type="match status" value="1"/>
</dbReference>
<dbReference type="Gene3D" id="3.30.1320.10">
    <property type="match status" value="1"/>
</dbReference>
<dbReference type="HAMAP" id="MF_00385">
    <property type="entry name" value="Ribosomal_bS16"/>
    <property type="match status" value="1"/>
</dbReference>
<dbReference type="InterPro" id="IPR000307">
    <property type="entry name" value="Ribosomal_bS16"/>
</dbReference>
<dbReference type="InterPro" id="IPR023803">
    <property type="entry name" value="Ribosomal_bS16_dom_sf"/>
</dbReference>
<dbReference type="NCBIfam" id="TIGR00002">
    <property type="entry name" value="S16"/>
    <property type="match status" value="1"/>
</dbReference>
<dbReference type="PANTHER" id="PTHR12919">
    <property type="entry name" value="30S RIBOSOMAL PROTEIN S16"/>
    <property type="match status" value="1"/>
</dbReference>
<dbReference type="PANTHER" id="PTHR12919:SF20">
    <property type="entry name" value="SMALL RIBOSOMAL SUBUNIT PROTEIN BS16M"/>
    <property type="match status" value="1"/>
</dbReference>
<dbReference type="Pfam" id="PF00886">
    <property type="entry name" value="Ribosomal_S16"/>
    <property type="match status" value="1"/>
</dbReference>
<dbReference type="SUPFAM" id="SSF54565">
    <property type="entry name" value="Ribosomal protein S16"/>
    <property type="match status" value="1"/>
</dbReference>
<reference key="1">
    <citation type="submission" date="2006-01" db="EMBL/GenBank/DDBJ databases">
        <title>Complete sequence of Rhodopseudomonas palustris HaA2.</title>
        <authorList>
            <consortium name="US DOE Joint Genome Institute"/>
            <person name="Copeland A."/>
            <person name="Lucas S."/>
            <person name="Lapidus A."/>
            <person name="Barry K."/>
            <person name="Detter J.C."/>
            <person name="Glavina T."/>
            <person name="Hammon N."/>
            <person name="Israni S."/>
            <person name="Pitluck S."/>
            <person name="Chain P."/>
            <person name="Malfatti S."/>
            <person name="Shin M."/>
            <person name="Vergez L."/>
            <person name="Schmutz J."/>
            <person name="Larimer F."/>
            <person name="Land M."/>
            <person name="Hauser L."/>
            <person name="Pelletier D.A."/>
            <person name="Kyrpides N."/>
            <person name="Anderson I."/>
            <person name="Oda Y."/>
            <person name="Harwood C.S."/>
            <person name="Richardson P."/>
        </authorList>
    </citation>
    <scope>NUCLEOTIDE SEQUENCE [LARGE SCALE GENOMIC DNA]</scope>
    <source>
        <strain>HaA2</strain>
    </source>
</reference>
<protein>
    <recommendedName>
        <fullName evidence="1">Small ribosomal subunit protein bS16</fullName>
    </recommendedName>
    <alternativeName>
        <fullName evidence="3">30S ribosomal protein S16</fullName>
    </alternativeName>
</protein>
<gene>
    <name evidence="1" type="primary">rpsP</name>
    <name type="ordered locus">RPB_0352</name>
</gene>
<feature type="chain" id="PRO_0000243860" description="Small ribosomal subunit protein bS16">
    <location>
        <begin position="1"/>
        <end position="110"/>
    </location>
</feature>
<feature type="region of interest" description="Disordered" evidence="2">
    <location>
        <begin position="87"/>
        <end position="110"/>
    </location>
</feature>
<proteinExistence type="inferred from homology"/>
<comment type="similarity">
    <text evidence="1">Belongs to the bacterial ribosomal protein bS16 family.</text>
</comment>
<sequence length="110" mass="12533">MSVVIRLARAGTKKRPFYHVVVADSRFPRDGRFIERLGYFNPLMAKDNEARLKLDLDKVKDWLAKGAQPSDRVARFLDITGVKKREARNNPEKAVPRKERKAAAEAAAKK</sequence>
<accession>Q2J397</accession>
<name>RS16_RHOP2</name>